<feature type="chain" id="PRO_0000328789" description="Protein FMC1 homolog">
    <location>
        <begin position="1"/>
        <end position="103"/>
    </location>
</feature>
<comment type="similarity">
    <text evidence="1">Belongs to the FMC1 family.</text>
</comment>
<evidence type="ECO:0000305" key="1"/>
<accession>A7S1A4</accession>
<gene>
    <name type="ORF">v1g242151</name>
</gene>
<organism>
    <name type="scientific">Nematostella vectensis</name>
    <name type="common">Starlet sea anemone</name>
    <dbReference type="NCBI Taxonomy" id="45351"/>
    <lineage>
        <taxon>Eukaryota</taxon>
        <taxon>Metazoa</taxon>
        <taxon>Cnidaria</taxon>
        <taxon>Anthozoa</taxon>
        <taxon>Hexacorallia</taxon>
        <taxon>Actiniaria</taxon>
        <taxon>Edwardsiidae</taxon>
        <taxon>Nematostella</taxon>
    </lineage>
</organism>
<proteinExistence type="inferred from homology"/>
<dbReference type="EMBL" id="DS469564">
    <property type="protein sequence ID" value="EDO42474.1"/>
    <property type="molecule type" value="Genomic_DNA"/>
</dbReference>
<dbReference type="RefSeq" id="XP_001634537.1">
    <property type="nucleotide sequence ID" value="XM_001634487.1"/>
</dbReference>
<dbReference type="STRING" id="45351.A7S1A4"/>
<dbReference type="EnsemblMetazoa" id="EDO42474">
    <property type="protein sequence ID" value="EDO42474"/>
    <property type="gene ID" value="NEMVEDRAFT_v1g242151"/>
</dbReference>
<dbReference type="KEGG" id="nve:5514296"/>
<dbReference type="HOGENOM" id="CLU_159000_0_0_1"/>
<dbReference type="InParanoid" id="A7S1A4"/>
<dbReference type="OMA" id="QYLITEF"/>
<dbReference type="OrthoDB" id="551431at2759"/>
<dbReference type="PhylomeDB" id="A7S1A4"/>
<dbReference type="Proteomes" id="UP000001593">
    <property type="component" value="Unassembled WGS sequence"/>
</dbReference>
<dbReference type="GO" id="GO:0005739">
    <property type="term" value="C:mitochondrion"/>
    <property type="evidence" value="ECO:0000318"/>
    <property type="project" value="GO_Central"/>
</dbReference>
<dbReference type="InterPro" id="IPR037667">
    <property type="entry name" value="FMC1_homologue"/>
</dbReference>
<dbReference type="PANTHER" id="PTHR31716">
    <property type="entry name" value="PROTEIN FMC1 HOMOLOG"/>
    <property type="match status" value="1"/>
</dbReference>
<dbReference type="PANTHER" id="PTHR31716:SF1">
    <property type="entry name" value="PROTEIN FMC1 HOMOLOG"/>
    <property type="match status" value="1"/>
</dbReference>
<dbReference type="Pfam" id="PF13233">
    <property type="entry name" value="Complex1_LYR_2"/>
    <property type="match status" value="1"/>
</dbReference>
<protein>
    <recommendedName>
        <fullName>Protein FMC1 homolog</fullName>
    </recommendedName>
</protein>
<name>FMC1_NEMVE</name>
<reference key="1">
    <citation type="journal article" date="2007" name="Science">
        <title>Sea anemone genome reveals ancestral eumetazoan gene repertoire and genomic organization.</title>
        <authorList>
            <person name="Putnam N.H."/>
            <person name="Srivastava M."/>
            <person name="Hellsten U."/>
            <person name="Dirks B."/>
            <person name="Chapman J."/>
            <person name="Salamov A."/>
            <person name="Terry A."/>
            <person name="Shapiro H."/>
            <person name="Lindquist E."/>
            <person name="Kapitonov V.V."/>
            <person name="Jurka J."/>
            <person name="Genikhovich G."/>
            <person name="Grigoriev I.V."/>
            <person name="Lucas S.M."/>
            <person name="Steele R.E."/>
            <person name="Finnerty J.R."/>
            <person name="Technau U."/>
            <person name="Martindale M.Q."/>
            <person name="Rokhsar D.S."/>
        </authorList>
    </citation>
    <scope>NUCLEOTIDE SEQUENCE [LARGE SCALE GENOMIC DNA]</scope>
    <source>
        <strain>CH2 X CH6</strain>
    </source>
</reference>
<sequence>MTASSLRTLRNILRELRRASPSTGPVREVFGYKFLLDEYRKTRNADEETVKTYQRDASYYLCLLKNERVKKELHEVYKGTGERPVEEVARMVGFKLPKTYDSS</sequence>
<keyword id="KW-1185">Reference proteome</keyword>